<organism>
    <name type="scientific">Sinorhizobium fredii (strain NBRC 101917 / NGR234)</name>
    <dbReference type="NCBI Taxonomy" id="394"/>
    <lineage>
        <taxon>Bacteria</taxon>
        <taxon>Pseudomonadati</taxon>
        <taxon>Pseudomonadota</taxon>
        <taxon>Alphaproteobacteria</taxon>
        <taxon>Hyphomicrobiales</taxon>
        <taxon>Rhizobiaceae</taxon>
        <taxon>Sinorhizobium/Ensifer group</taxon>
        <taxon>Sinorhizobium</taxon>
    </lineage>
</organism>
<dbReference type="EMBL" id="CP001389">
    <property type="protein sequence ID" value="ACP25016.1"/>
    <property type="molecule type" value="Genomic_DNA"/>
</dbReference>
<dbReference type="RefSeq" id="WP_012707793.1">
    <property type="nucleotide sequence ID" value="NC_012587.1"/>
</dbReference>
<dbReference type="RefSeq" id="YP_002825769.1">
    <property type="nucleotide sequence ID" value="NC_012587.1"/>
</dbReference>
<dbReference type="STRING" id="394.NGR_c12350"/>
<dbReference type="KEGG" id="rhi:NGR_c12350"/>
<dbReference type="PATRIC" id="fig|394.7.peg.4052"/>
<dbReference type="eggNOG" id="COG2718">
    <property type="taxonomic scope" value="Bacteria"/>
</dbReference>
<dbReference type="HOGENOM" id="CLU_049702_0_0_5"/>
<dbReference type="OrthoDB" id="9788289at2"/>
<dbReference type="Proteomes" id="UP000001054">
    <property type="component" value="Chromosome"/>
</dbReference>
<dbReference type="HAMAP" id="MF_01232">
    <property type="entry name" value="UPF0229"/>
    <property type="match status" value="1"/>
</dbReference>
<dbReference type="InterPro" id="IPR006698">
    <property type="entry name" value="UPF0229"/>
</dbReference>
<dbReference type="NCBIfam" id="NF003707">
    <property type="entry name" value="PRK05325.1-2"/>
    <property type="match status" value="1"/>
</dbReference>
<dbReference type="NCBIfam" id="NF003708">
    <property type="entry name" value="PRK05325.1-3"/>
    <property type="match status" value="1"/>
</dbReference>
<dbReference type="PANTHER" id="PTHR30510">
    <property type="entry name" value="UPF0229 PROTEIN YEAH"/>
    <property type="match status" value="1"/>
</dbReference>
<dbReference type="PANTHER" id="PTHR30510:SF2">
    <property type="entry name" value="UPF0229 PROTEIN YEAH"/>
    <property type="match status" value="1"/>
</dbReference>
<dbReference type="Pfam" id="PF04285">
    <property type="entry name" value="DUF444"/>
    <property type="match status" value="1"/>
</dbReference>
<comment type="similarity">
    <text evidence="1">Belongs to the UPF0229 family.</text>
</comment>
<accession>C3MB23</accession>
<feature type="chain" id="PRO_1000164982" description="UPF0229 protein NGR_c12350">
    <location>
        <begin position="1"/>
        <end position="438"/>
    </location>
</feature>
<feature type="region of interest" description="Disordered" evidence="2">
    <location>
        <begin position="1"/>
        <end position="20"/>
    </location>
</feature>
<feature type="region of interest" description="Disordered" evidence="2">
    <location>
        <begin position="83"/>
        <end position="107"/>
    </location>
</feature>
<feature type="compositionally biased region" description="Basic and acidic residues" evidence="2">
    <location>
        <begin position="1"/>
        <end position="16"/>
    </location>
</feature>
<feature type="compositionally biased region" description="Gly residues" evidence="2">
    <location>
        <begin position="94"/>
        <end position="105"/>
    </location>
</feature>
<sequence>MPNFIDRRLNPKDKSLGNRQRFLKRAREELKRAIKEQVKSGKITDVDAEHNVSMPARGVSEPTFQPAGDSGERQYVLPGNREFAAGDRLPKRSSGGGATGAGAGTGQSQDEFQFVLSREEVLDLFFEDLELPDMVKLNLKESVAFKRRRAGFAATGSPMNINVGRTMRNSFGRRIALHRPGRKEMEAIAEEIARLEVEPNAGAKHLQHLEELRQKLEKLERRRRRIPYVDPVDIRFNRFEQQPLPNASAVMFCLMDVSASMGEREKDLAKRFFVLLHLFLKRRYDRIDIVFIRHTDEAGEVDENTFFYSKQSGGTIVSTALEEMLRVIRERYPAREWNIYAAQASDGENISGDSERCASLLHDDLMRLCQYYAYVEIIDERETEIFGTTDNGTSLWRAYRTVDGEWPNFQMTRIAKPADIYPVFRKLFGKQPAVQVRK</sequence>
<name>Y1235_SINFN</name>
<keyword id="KW-1185">Reference proteome</keyword>
<reference key="1">
    <citation type="journal article" date="2009" name="Appl. Environ. Microbiol.">
        <title>Rhizobium sp. strain NGR234 possesses a remarkable number of secretion systems.</title>
        <authorList>
            <person name="Schmeisser C."/>
            <person name="Liesegang H."/>
            <person name="Krysciak D."/>
            <person name="Bakkou N."/>
            <person name="Le Quere A."/>
            <person name="Wollherr A."/>
            <person name="Heinemeyer I."/>
            <person name="Morgenstern B."/>
            <person name="Pommerening-Roeser A."/>
            <person name="Flores M."/>
            <person name="Palacios R."/>
            <person name="Brenner S."/>
            <person name="Gottschalk G."/>
            <person name="Schmitz R.A."/>
            <person name="Broughton W.J."/>
            <person name="Perret X."/>
            <person name="Strittmatter A.W."/>
            <person name="Streit W.R."/>
        </authorList>
    </citation>
    <scope>NUCLEOTIDE SEQUENCE [LARGE SCALE GENOMIC DNA]</scope>
    <source>
        <strain>NBRC 101917 / NGR234</strain>
    </source>
</reference>
<evidence type="ECO:0000255" key="1">
    <source>
        <dbReference type="HAMAP-Rule" id="MF_01232"/>
    </source>
</evidence>
<evidence type="ECO:0000256" key="2">
    <source>
        <dbReference type="SAM" id="MobiDB-lite"/>
    </source>
</evidence>
<gene>
    <name type="ordered locus">NGR_c12350</name>
</gene>
<protein>
    <recommendedName>
        <fullName evidence="1">UPF0229 protein NGR_c12350</fullName>
    </recommendedName>
</protein>
<proteinExistence type="inferred from homology"/>